<feature type="chain" id="PRO_0000211691" description="DNA gyrase inhibitor YacG">
    <location>
        <begin position="1"/>
        <end position="57"/>
    </location>
</feature>
<feature type="binding site" evidence="1">
    <location>
        <position position="10"/>
    </location>
    <ligand>
        <name>Zn(2+)</name>
        <dbReference type="ChEBI" id="CHEBI:29105"/>
    </ligand>
</feature>
<feature type="binding site" evidence="1">
    <location>
        <position position="13"/>
    </location>
    <ligand>
        <name>Zn(2+)</name>
        <dbReference type="ChEBI" id="CHEBI:29105"/>
    </ligand>
</feature>
<feature type="binding site" evidence="1">
    <location>
        <position position="25"/>
    </location>
    <ligand>
        <name>Zn(2+)</name>
        <dbReference type="ChEBI" id="CHEBI:29105"/>
    </ligand>
</feature>
<feature type="binding site" evidence="1">
    <location>
        <position position="29"/>
    </location>
    <ligand>
        <name>Zn(2+)</name>
        <dbReference type="ChEBI" id="CHEBI:29105"/>
    </ligand>
</feature>
<dbReference type="EMBL" id="AE008917">
    <property type="protein sequence ID" value="AAL52854.1"/>
    <property type="status" value="ALT_INIT"/>
    <property type="molecule type" value="Genomic_DNA"/>
</dbReference>
<dbReference type="PIR" id="AC3461">
    <property type="entry name" value="AC3461"/>
</dbReference>
<dbReference type="SMR" id="P67479"/>
<dbReference type="KEGG" id="bme:BMEI1673"/>
<dbReference type="eggNOG" id="COG3024">
    <property type="taxonomic scope" value="Bacteria"/>
</dbReference>
<dbReference type="Proteomes" id="UP000000419">
    <property type="component" value="Chromosome I"/>
</dbReference>
<dbReference type="GO" id="GO:0008657">
    <property type="term" value="F:DNA topoisomerase type II (double strand cut, ATP-hydrolyzing) inhibitor activity"/>
    <property type="evidence" value="ECO:0007669"/>
    <property type="project" value="UniProtKB-UniRule"/>
</dbReference>
<dbReference type="GO" id="GO:0008270">
    <property type="term" value="F:zinc ion binding"/>
    <property type="evidence" value="ECO:0007669"/>
    <property type="project" value="UniProtKB-UniRule"/>
</dbReference>
<dbReference type="GO" id="GO:0006355">
    <property type="term" value="P:regulation of DNA-templated transcription"/>
    <property type="evidence" value="ECO:0007669"/>
    <property type="project" value="InterPro"/>
</dbReference>
<dbReference type="Gene3D" id="3.30.50.10">
    <property type="entry name" value="Erythroid Transcription Factor GATA-1, subunit A"/>
    <property type="match status" value="1"/>
</dbReference>
<dbReference type="HAMAP" id="MF_00649">
    <property type="entry name" value="DNA_gyrase_inhibitor_YacG"/>
    <property type="match status" value="1"/>
</dbReference>
<dbReference type="InterPro" id="IPR005584">
    <property type="entry name" value="DNA_gyrase_inhibitor_YacG"/>
</dbReference>
<dbReference type="InterPro" id="IPR013088">
    <property type="entry name" value="Znf_NHR/GATA"/>
</dbReference>
<dbReference type="NCBIfam" id="NF002362">
    <property type="entry name" value="PRK01343.1"/>
    <property type="match status" value="1"/>
</dbReference>
<dbReference type="PANTHER" id="PTHR36150">
    <property type="entry name" value="DNA GYRASE INHIBITOR YACG"/>
    <property type="match status" value="1"/>
</dbReference>
<dbReference type="PANTHER" id="PTHR36150:SF1">
    <property type="entry name" value="DNA GYRASE INHIBITOR YACG"/>
    <property type="match status" value="1"/>
</dbReference>
<dbReference type="Pfam" id="PF03884">
    <property type="entry name" value="YacG"/>
    <property type="match status" value="1"/>
</dbReference>
<dbReference type="SUPFAM" id="SSF57716">
    <property type="entry name" value="Glucocorticoid receptor-like (DNA-binding domain)"/>
    <property type="match status" value="1"/>
</dbReference>
<accession>P67479</accession>
<accession>Q8G2R7</accession>
<accession>Q8YF54</accession>
<proteinExistence type="inferred from homology"/>
<reference key="1">
    <citation type="journal article" date="2002" name="Proc. Natl. Acad. Sci. U.S.A.">
        <title>The genome sequence of the facultative intracellular pathogen Brucella melitensis.</title>
        <authorList>
            <person name="DelVecchio V.G."/>
            <person name="Kapatral V."/>
            <person name="Redkar R.J."/>
            <person name="Patra G."/>
            <person name="Mujer C."/>
            <person name="Los T."/>
            <person name="Ivanova N."/>
            <person name="Anderson I."/>
            <person name="Bhattacharyya A."/>
            <person name="Lykidis A."/>
            <person name="Reznik G."/>
            <person name="Jablonski L."/>
            <person name="Larsen N."/>
            <person name="D'Souza M."/>
            <person name="Bernal A."/>
            <person name="Mazur M."/>
            <person name="Goltsman E."/>
            <person name="Selkov E."/>
            <person name="Elzer P.H."/>
            <person name="Hagius S."/>
            <person name="O'Callaghan D."/>
            <person name="Letesson J.-J."/>
            <person name="Haselkorn R."/>
            <person name="Kyrpides N.C."/>
            <person name="Overbeek R."/>
        </authorList>
    </citation>
    <scope>NUCLEOTIDE SEQUENCE [LARGE SCALE GENOMIC DNA]</scope>
    <source>
        <strain>ATCC 23456 / CCUG 17765 / NCTC 10094 / 16M</strain>
    </source>
</reference>
<keyword id="KW-0479">Metal-binding</keyword>
<keyword id="KW-0862">Zinc</keyword>
<sequence>MTPLRPTRPCPECGKPSTREAYPFCSPRCKNIDLNRWLSGSYVIAGKPLGEEDENDS</sequence>
<gene>
    <name evidence="1" type="primary">yacG</name>
    <name type="ordered locus">BMEI1673</name>
</gene>
<comment type="function">
    <text evidence="1">Inhibits all the catalytic activities of DNA gyrase by preventing its interaction with DNA. Acts by binding directly to the C-terminal domain of GyrB, which probably disrupts DNA binding by the gyrase.</text>
</comment>
<comment type="cofactor">
    <cofactor evidence="1">
        <name>Zn(2+)</name>
        <dbReference type="ChEBI" id="CHEBI:29105"/>
    </cofactor>
    <text evidence="1">Binds 1 zinc ion.</text>
</comment>
<comment type="subunit">
    <text evidence="1">Interacts with GyrB.</text>
</comment>
<comment type="similarity">
    <text evidence="1">Belongs to the DNA gyrase inhibitor YacG family.</text>
</comment>
<comment type="sequence caution" evidence="2">
    <conflict type="erroneous initiation">
        <sequence resource="EMBL-CDS" id="AAL52854"/>
    </conflict>
    <text>Extended N-terminus.</text>
</comment>
<evidence type="ECO:0000255" key="1">
    <source>
        <dbReference type="HAMAP-Rule" id="MF_00649"/>
    </source>
</evidence>
<evidence type="ECO:0000305" key="2"/>
<organism>
    <name type="scientific">Brucella melitensis biotype 1 (strain ATCC 23456 / CCUG 17765 / NCTC 10094 / 16M)</name>
    <dbReference type="NCBI Taxonomy" id="224914"/>
    <lineage>
        <taxon>Bacteria</taxon>
        <taxon>Pseudomonadati</taxon>
        <taxon>Pseudomonadota</taxon>
        <taxon>Alphaproteobacteria</taxon>
        <taxon>Hyphomicrobiales</taxon>
        <taxon>Brucellaceae</taxon>
        <taxon>Brucella/Ochrobactrum group</taxon>
        <taxon>Brucella</taxon>
    </lineage>
</organism>
<protein>
    <recommendedName>
        <fullName evidence="1">DNA gyrase inhibitor YacG</fullName>
    </recommendedName>
</protein>
<name>YACG_BRUME</name>